<sequence length="350" mass="37736">MTYKITSLAGDGIGPEIMTSGLQVLEAVAKKYNHTFEIESHPFGGAGIDVAQDPIPSSTLKACRDADAILLGAIGGPKWDNAPKRPEDGLLALRKALGLFANIRPIQVPSSITHLSPLKKEIVENTDFVVVRELTGGLYFGEPKYWDNEAAVDSLTYTRAEIERIIEKAFEIAATRNKKVTSVDKANVLASSKLWRKIADEVASRHPDITLEHLYVDAAAMLMIQRPTTFDVIVTENLFGDILSDEASVITGSLGMLPSASHAENGPSLYEPIHGSAPDIANQNIANPMSMISSVSMMLRQSFSLFEEADAIDAATARTMQAGFLTADLGGNTSTTDFTNEVLKQIEGGE</sequence>
<gene>
    <name evidence="1" type="primary">leuB</name>
    <name type="ordered locus">LMOf2365_2011</name>
</gene>
<name>LEU3_LISMF</name>
<organism>
    <name type="scientific">Listeria monocytogenes serotype 4b (strain F2365)</name>
    <dbReference type="NCBI Taxonomy" id="265669"/>
    <lineage>
        <taxon>Bacteria</taxon>
        <taxon>Bacillati</taxon>
        <taxon>Bacillota</taxon>
        <taxon>Bacilli</taxon>
        <taxon>Bacillales</taxon>
        <taxon>Listeriaceae</taxon>
        <taxon>Listeria</taxon>
    </lineage>
</organism>
<keyword id="KW-0028">Amino-acid biosynthesis</keyword>
<keyword id="KW-0100">Branched-chain amino acid biosynthesis</keyword>
<keyword id="KW-0963">Cytoplasm</keyword>
<keyword id="KW-0432">Leucine biosynthesis</keyword>
<keyword id="KW-0460">Magnesium</keyword>
<keyword id="KW-0464">Manganese</keyword>
<keyword id="KW-0479">Metal-binding</keyword>
<keyword id="KW-0520">NAD</keyword>
<keyword id="KW-0560">Oxidoreductase</keyword>
<accession>Q71Y34</accession>
<comment type="function">
    <text evidence="1">Catalyzes the oxidation of 3-carboxy-2-hydroxy-4-methylpentanoate (3-isopropylmalate) to 3-carboxy-4-methyl-2-oxopentanoate. The product decarboxylates to 4-methyl-2 oxopentanoate.</text>
</comment>
<comment type="catalytic activity">
    <reaction evidence="1">
        <text>(2R,3S)-3-isopropylmalate + NAD(+) = 4-methyl-2-oxopentanoate + CO2 + NADH</text>
        <dbReference type="Rhea" id="RHEA:32271"/>
        <dbReference type="ChEBI" id="CHEBI:16526"/>
        <dbReference type="ChEBI" id="CHEBI:17865"/>
        <dbReference type="ChEBI" id="CHEBI:35121"/>
        <dbReference type="ChEBI" id="CHEBI:57540"/>
        <dbReference type="ChEBI" id="CHEBI:57945"/>
        <dbReference type="EC" id="1.1.1.85"/>
    </reaction>
</comment>
<comment type="cofactor">
    <cofactor evidence="1">
        <name>Mg(2+)</name>
        <dbReference type="ChEBI" id="CHEBI:18420"/>
    </cofactor>
    <cofactor evidence="1">
        <name>Mn(2+)</name>
        <dbReference type="ChEBI" id="CHEBI:29035"/>
    </cofactor>
    <text evidence="1">Binds 1 Mg(2+) or Mn(2+) ion per subunit.</text>
</comment>
<comment type="pathway">
    <text evidence="1">Amino-acid biosynthesis; L-leucine biosynthesis; L-leucine from 3-methyl-2-oxobutanoate: step 3/4.</text>
</comment>
<comment type="subunit">
    <text evidence="1">Homodimer.</text>
</comment>
<comment type="subcellular location">
    <subcellularLocation>
        <location evidence="1">Cytoplasm</location>
    </subcellularLocation>
</comment>
<comment type="similarity">
    <text evidence="1">Belongs to the isocitrate and isopropylmalate dehydrogenases family. LeuB type 1 subfamily.</text>
</comment>
<feature type="chain" id="PRO_0000083706" description="3-isopropylmalate dehydrogenase">
    <location>
        <begin position="1"/>
        <end position="350"/>
    </location>
</feature>
<feature type="binding site" evidence="1">
    <location>
        <begin position="76"/>
        <end position="87"/>
    </location>
    <ligand>
        <name>NAD(+)</name>
        <dbReference type="ChEBI" id="CHEBI:57540"/>
    </ligand>
</feature>
<feature type="binding site" evidence="1">
    <location>
        <position position="94"/>
    </location>
    <ligand>
        <name>substrate</name>
    </ligand>
</feature>
<feature type="binding site" evidence="1">
    <location>
        <position position="104"/>
    </location>
    <ligand>
        <name>substrate</name>
    </ligand>
</feature>
<feature type="binding site" evidence="1">
    <location>
        <position position="132"/>
    </location>
    <ligand>
        <name>substrate</name>
    </ligand>
</feature>
<feature type="binding site" evidence="1">
    <location>
        <position position="217"/>
    </location>
    <ligand>
        <name>Mg(2+)</name>
        <dbReference type="ChEBI" id="CHEBI:18420"/>
    </ligand>
</feature>
<feature type="binding site" evidence="1">
    <location>
        <position position="217"/>
    </location>
    <ligand>
        <name>substrate</name>
    </ligand>
</feature>
<feature type="binding site" evidence="1">
    <location>
        <position position="241"/>
    </location>
    <ligand>
        <name>Mg(2+)</name>
        <dbReference type="ChEBI" id="CHEBI:18420"/>
    </ligand>
</feature>
<feature type="binding site" evidence="1">
    <location>
        <position position="245"/>
    </location>
    <ligand>
        <name>Mg(2+)</name>
        <dbReference type="ChEBI" id="CHEBI:18420"/>
    </ligand>
</feature>
<feature type="binding site" evidence="1">
    <location>
        <begin position="275"/>
        <end position="287"/>
    </location>
    <ligand>
        <name>NAD(+)</name>
        <dbReference type="ChEBI" id="CHEBI:57540"/>
    </ligand>
</feature>
<feature type="site" description="Important for catalysis" evidence="1">
    <location>
        <position position="139"/>
    </location>
</feature>
<feature type="site" description="Important for catalysis" evidence="1">
    <location>
        <position position="185"/>
    </location>
</feature>
<dbReference type="EC" id="1.1.1.85" evidence="1"/>
<dbReference type="EMBL" id="AE017262">
    <property type="protein sequence ID" value="AAT04781.1"/>
    <property type="molecule type" value="Genomic_DNA"/>
</dbReference>
<dbReference type="RefSeq" id="WP_003727976.1">
    <property type="nucleotide sequence ID" value="NC_002973.6"/>
</dbReference>
<dbReference type="SMR" id="Q71Y34"/>
<dbReference type="KEGG" id="lmf:LMOf2365_2011"/>
<dbReference type="HOGENOM" id="CLU_031953_0_3_9"/>
<dbReference type="UniPathway" id="UPA00048">
    <property type="reaction ID" value="UER00072"/>
</dbReference>
<dbReference type="GO" id="GO:0005829">
    <property type="term" value="C:cytosol"/>
    <property type="evidence" value="ECO:0007669"/>
    <property type="project" value="TreeGrafter"/>
</dbReference>
<dbReference type="GO" id="GO:0003862">
    <property type="term" value="F:3-isopropylmalate dehydrogenase activity"/>
    <property type="evidence" value="ECO:0007669"/>
    <property type="project" value="UniProtKB-UniRule"/>
</dbReference>
<dbReference type="GO" id="GO:0000287">
    <property type="term" value="F:magnesium ion binding"/>
    <property type="evidence" value="ECO:0007669"/>
    <property type="project" value="InterPro"/>
</dbReference>
<dbReference type="GO" id="GO:0051287">
    <property type="term" value="F:NAD binding"/>
    <property type="evidence" value="ECO:0007669"/>
    <property type="project" value="InterPro"/>
</dbReference>
<dbReference type="GO" id="GO:0009098">
    <property type="term" value="P:L-leucine biosynthetic process"/>
    <property type="evidence" value="ECO:0007669"/>
    <property type="project" value="UniProtKB-UniRule"/>
</dbReference>
<dbReference type="FunFam" id="3.40.718.10:FF:000006">
    <property type="entry name" value="3-isopropylmalate dehydrogenase"/>
    <property type="match status" value="1"/>
</dbReference>
<dbReference type="Gene3D" id="3.40.718.10">
    <property type="entry name" value="Isopropylmalate Dehydrogenase"/>
    <property type="match status" value="1"/>
</dbReference>
<dbReference type="HAMAP" id="MF_01033">
    <property type="entry name" value="LeuB_type1"/>
    <property type="match status" value="1"/>
</dbReference>
<dbReference type="InterPro" id="IPR019818">
    <property type="entry name" value="IsoCit/isopropylmalate_DH_CS"/>
</dbReference>
<dbReference type="InterPro" id="IPR024084">
    <property type="entry name" value="IsoPropMal-DH-like_dom"/>
</dbReference>
<dbReference type="InterPro" id="IPR004429">
    <property type="entry name" value="Isopropylmalate_DH"/>
</dbReference>
<dbReference type="NCBIfam" id="TIGR00169">
    <property type="entry name" value="leuB"/>
    <property type="match status" value="1"/>
</dbReference>
<dbReference type="PANTHER" id="PTHR42979">
    <property type="entry name" value="3-ISOPROPYLMALATE DEHYDROGENASE"/>
    <property type="match status" value="1"/>
</dbReference>
<dbReference type="PANTHER" id="PTHR42979:SF1">
    <property type="entry name" value="3-ISOPROPYLMALATE DEHYDROGENASE"/>
    <property type="match status" value="1"/>
</dbReference>
<dbReference type="Pfam" id="PF00180">
    <property type="entry name" value="Iso_dh"/>
    <property type="match status" value="1"/>
</dbReference>
<dbReference type="SMART" id="SM01329">
    <property type="entry name" value="Iso_dh"/>
    <property type="match status" value="1"/>
</dbReference>
<dbReference type="SUPFAM" id="SSF53659">
    <property type="entry name" value="Isocitrate/Isopropylmalate dehydrogenase-like"/>
    <property type="match status" value="1"/>
</dbReference>
<dbReference type="PROSITE" id="PS00470">
    <property type="entry name" value="IDH_IMDH"/>
    <property type="match status" value="1"/>
</dbReference>
<evidence type="ECO:0000255" key="1">
    <source>
        <dbReference type="HAMAP-Rule" id="MF_01033"/>
    </source>
</evidence>
<proteinExistence type="inferred from homology"/>
<reference key="1">
    <citation type="journal article" date="2004" name="Nucleic Acids Res.">
        <title>Whole genome comparisons of serotype 4b and 1/2a strains of the food-borne pathogen Listeria monocytogenes reveal new insights into the core genome components of this species.</title>
        <authorList>
            <person name="Nelson K.E."/>
            <person name="Fouts D.E."/>
            <person name="Mongodin E.F."/>
            <person name="Ravel J."/>
            <person name="DeBoy R.T."/>
            <person name="Kolonay J.F."/>
            <person name="Rasko D.A."/>
            <person name="Angiuoli S.V."/>
            <person name="Gill S.R."/>
            <person name="Paulsen I.T."/>
            <person name="Peterson J.D."/>
            <person name="White O."/>
            <person name="Nelson W.C."/>
            <person name="Nierman W.C."/>
            <person name="Beanan M.J."/>
            <person name="Brinkac L.M."/>
            <person name="Daugherty S.C."/>
            <person name="Dodson R.J."/>
            <person name="Durkin A.S."/>
            <person name="Madupu R."/>
            <person name="Haft D.H."/>
            <person name="Selengut J."/>
            <person name="Van Aken S.E."/>
            <person name="Khouri H.M."/>
            <person name="Fedorova N."/>
            <person name="Forberger H.A."/>
            <person name="Tran B."/>
            <person name="Kathariou S."/>
            <person name="Wonderling L.D."/>
            <person name="Uhlich G.A."/>
            <person name="Bayles D.O."/>
            <person name="Luchansky J.B."/>
            <person name="Fraser C.M."/>
        </authorList>
    </citation>
    <scope>NUCLEOTIDE SEQUENCE [LARGE SCALE GENOMIC DNA]</scope>
    <source>
        <strain>F2365</strain>
    </source>
</reference>
<protein>
    <recommendedName>
        <fullName evidence="1">3-isopropylmalate dehydrogenase</fullName>
        <ecNumber evidence="1">1.1.1.85</ecNumber>
    </recommendedName>
    <alternativeName>
        <fullName evidence="1">3-IPM-DH</fullName>
    </alternativeName>
    <alternativeName>
        <fullName evidence="1">Beta-IPM dehydrogenase</fullName>
        <shortName evidence="1">IMDH</shortName>
    </alternativeName>
</protein>